<reference key="1">
    <citation type="journal article" date="2007" name="Mol. Genet. Genomics">
        <title>Chloroplast genomes of the diatoms Phaeodactylum tricornutum and Thalassiosira pseudonana: comparison with other plastid genomes of the red lineage.</title>
        <authorList>
            <person name="Oudot-Le Secq M.-P."/>
            <person name="Grimwood J."/>
            <person name="Shapiro H."/>
            <person name="Armbrust E.V."/>
            <person name="Bowler C."/>
            <person name="Green B.R."/>
        </authorList>
    </citation>
    <scope>NUCLEOTIDE SEQUENCE [LARGE SCALE GENOMIC DNA]</scope>
    <source>
        <strain>CCAP 1055/1</strain>
    </source>
</reference>
<name>PSAM_PHATC</name>
<evidence type="ECO:0000255" key="1">
    <source>
        <dbReference type="HAMAP-Rule" id="MF_00828"/>
    </source>
</evidence>
<proteinExistence type="inferred from homology"/>
<gene>
    <name evidence="1" type="primary">psaM</name>
</gene>
<organism>
    <name type="scientific">Phaeodactylum tricornutum (strain CCAP 1055/1)</name>
    <dbReference type="NCBI Taxonomy" id="556484"/>
    <lineage>
        <taxon>Eukaryota</taxon>
        <taxon>Sar</taxon>
        <taxon>Stramenopiles</taxon>
        <taxon>Ochrophyta</taxon>
        <taxon>Bacillariophyta</taxon>
        <taxon>Bacillariophyceae</taxon>
        <taxon>Bacillariophycidae</taxon>
        <taxon>Naviculales</taxon>
        <taxon>Phaeodactylaceae</taxon>
        <taxon>Phaeodactylum</taxon>
    </lineage>
</organism>
<accession>A0T0B4</accession>
<dbReference type="EMBL" id="EF067920">
    <property type="protein sequence ID" value="ABK20612.1"/>
    <property type="molecule type" value="Genomic_DNA"/>
</dbReference>
<dbReference type="RefSeq" id="YP_874389.1">
    <property type="nucleotide sequence ID" value="NC_008588.1"/>
</dbReference>
<dbReference type="SMR" id="A0T0B4"/>
<dbReference type="STRING" id="556484.A0T0B4"/>
<dbReference type="GeneID" id="4524674"/>
<dbReference type="InParanoid" id="A0T0B4"/>
<dbReference type="Proteomes" id="UP000000759">
    <property type="component" value="Chloroplast"/>
</dbReference>
<dbReference type="GO" id="GO:0009535">
    <property type="term" value="C:chloroplast thylakoid membrane"/>
    <property type="evidence" value="ECO:0007669"/>
    <property type="project" value="UniProtKB-SubCell"/>
</dbReference>
<dbReference type="GO" id="GO:0009522">
    <property type="term" value="C:photosystem I"/>
    <property type="evidence" value="ECO:0007669"/>
    <property type="project" value="UniProtKB-KW"/>
</dbReference>
<dbReference type="GO" id="GO:0015979">
    <property type="term" value="P:photosynthesis"/>
    <property type="evidence" value="ECO:0007669"/>
    <property type="project" value="UniProtKB-UniRule"/>
</dbReference>
<dbReference type="HAMAP" id="MF_00828">
    <property type="entry name" value="PSI_PsaM"/>
    <property type="match status" value="1"/>
</dbReference>
<dbReference type="InterPro" id="IPR010010">
    <property type="entry name" value="PSI_PsaM"/>
</dbReference>
<dbReference type="InterPro" id="IPR037279">
    <property type="entry name" value="PSI_PsaM_sf"/>
</dbReference>
<dbReference type="NCBIfam" id="TIGR03053">
    <property type="entry name" value="PS_I_psaM"/>
    <property type="match status" value="1"/>
</dbReference>
<dbReference type="Pfam" id="PF07465">
    <property type="entry name" value="PsaM"/>
    <property type="match status" value="1"/>
</dbReference>
<dbReference type="SUPFAM" id="SSF81548">
    <property type="entry name" value="Subunit XII of photosystem I reaction centre, PsaM"/>
    <property type="match status" value="1"/>
</dbReference>
<geneLocation type="chloroplast"/>
<feature type="chain" id="PRO_0000277410" description="Photosystem I reaction center subunit XII">
    <location>
        <begin position="1"/>
        <end position="30"/>
    </location>
</feature>
<feature type="transmembrane region" description="Helical" evidence="1">
    <location>
        <begin position="7"/>
        <end position="29"/>
    </location>
</feature>
<protein>
    <recommendedName>
        <fullName evidence="1">Photosystem I reaction center subunit XII</fullName>
    </recommendedName>
    <alternativeName>
        <fullName evidence="1">PSI-M</fullName>
    </alternativeName>
</protein>
<sequence length="30" mass="3318">MIYDSQIYTVLCIALLAGILAIRLGSTLYE</sequence>
<comment type="subcellular location">
    <subcellularLocation>
        <location evidence="1">Plastid</location>
        <location evidence="1">Chloroplast thylakoid membrane</location>
        <topology evidence="1">Single-pass membrane protein</topology>
    </subcellularLocation>
</comment>
<comment type="similarity">
    <text evidence="1">Belongs to the PsaM family.</text>
</comment>
<keyword id="KW-0150">Chloroplast</keyword>
<keyword id="KW-0472">Membrane</keyword>
<keyword id="KW-0602">Photosynthesis</keyword>
<keyword id="KW-0603">Photosystem I</keyword>
<keyword id="KW-0934">Plastid</keyword>
<keyword id="KW-1185">Reference proteome</keyword>
<keyword id="KW-0793">Thylakoid</keyword>
<keyword id="KW-0812">Transmembrane</keyword>
<keyword id="KW-1133">Transmembrane helix</keyword>